<dbReference type="EMBL" id="AK078878">
    <property type="protein sequence ID" value="BAC37438.1"/>
    <property type="molecule type" value="mRNA"/>
</dbReference>
<dbReference type="EMBL" id="BC016579">
    <property type="protein sequence ID" value="AAH16579.1"/>
    <property type="status" value="ALT_INIT"/>
    <property type="molecule type" value="mRNA"/>
</dbReference>
<dbReference type="CCDS" id="CCDS49862.1"/>
<dbReference type="RefSeq" id="NP_663364.2">
    <property type="nucleotide sequence ID" value="NM_145389.2"/>
</dbReference>
<dbReference type="FunCoup" id="Q8C5C9">
    <property type="interactions" value="71"/>
</dbReference>
<dbReference type="iPTMnet" id="Q8C5C9"/>
<dbReference type="PhosphoSitePlus" id="Q8C5C9"/>
<dbReference type="PaxDb" id="10090-ENSMUSP00000037651"/>
<dbReference type="DNASU" id="212998"/>
<dbReference type="GeneID" id="212998"/>
<dbReference type="KEGG" id="mmu:212998"/>
<dbReference type="AGR" id="MGI:2384848"/>
<dbReference type="MGI" id="MGI:2384848">
    <property type="gene designation" value="BC016579"/>
</dbReference>
<dbReference type="eggNOG" id="ENOG502S6A0">
    <property type="taxonomic scope" value="Eukaryota"/>
</dbReference>
<dbReference type="InParanoid" id="Q8C5C9"/>
<dbReference type="OrthoDB" id="8879801at2759"/>
<dbReference type="PhylomeDB" id="Q8C5C9"/>
<dbReference type="BioGRID-ORCS" id="212998">
    <property type="hits" value="1 hit in 77 CRISPR screens"/>
</dbReference>
<dbReference type="PRO" id="PR:Q8C5C9"/>
<dbReference type="Proteomes" id="UP000000589">
    <property type="component" value="Unplaced"/>
</dbReference>
<dbReference type="RNAct" id="Q8C5C9">
    <property type="molecule type" value="protein"/>
</dbReference>
<dbReference type="GO" id="GO:0005789">
    <property type="term" value="C:endoplasmic reticulum membrane"/>
    <property type="evidence" value="ECO:0007669"/>
    <property type="project" value="UniProtKB-SubCell"/>
</dbReference>
<dbReference type="InterPro" id="IPR033223">
    <property type="entry name" value="TTMP"/>
</dbReference>
<dbReference type="PANTHER" id="PTHR14636">
    <property type="entry name" value="TPA-INDUCED TRANSMEMBRANE PROTEIN"/>
    <property type="match status" value="1"/>
</dbReference>
<dbReference type="PANTHER" id="PTHR14636:SF1">
    <property type="entry name" value="TPA-INDUCED TRANSMEMBRANE PROTEIN"/>
    <property type="match status" value="1"/>
</dbReference>
<organism>
    <name type="scientific">Mus musculus</name>
    <name type="common">Mouse</name>
    <dbReference type="NCBI Taxonomy" id="10090"/>
    <lineage>
        <taxon>Eukaryota</taxon>
        <taxon>Metazoa</taxon>
        <taxon>Chordata</taxon>
        <taxon>Craniata</taxon>
        <taxon>Vertebrata</taxon>
        <taxon>Euteleostomi</taxon>
        <taxon>Mammalia</taxon>
        <taxon>Eutheria</taxon>
        <taxon>Euarchontoglires</taxon>
        <taxon>Glires</taxon>
        <taxon>Rodentia</taxon>
        <taxon>Myomorpha</taxon>
        <taxon>Muroidea</taxon>
        <taxon>Muridae</taxon>
        <taxon>Murinae</taxon>
        <taxon>Mus</taxon>
        <taxon>Mus</taxon>
    </lineage>
</organism>
<sequence length="218" mass="24709">MEEGSRSQSPREELELSMLDGPQEELTPLNNDLRIQPNSAEDPSPAQVGKESPWSPCNKSVVGKCKLWMVIVTIFLCFIIVIVISLCLVGVTYIDEDENEILELSSNKTFFITLKIPEECANEEGLHHLLTERLTDTYRQSPSLSRFFTSADILDFSVENATVTYHLQFGVPSEDDDFMKYMMSEELVLGIMRQSFHDKNISTCESLGLDPESLLLYE</sequence>
<accession>Q8C5C9</accession>
<accession>Q91YJ8</accession>
<comment type="subcellular location">
    <subcellularLocation>
        <location evidence="3">Endoplasmic reticulum membrane</location>
        <topology evidence="3">Single-pass type I membrane protein</topology>
    </subcellularLocation>
</comment>
<comment type="sequence caution" evidence="3">
    <conflict type="erroneous initiation">
        <sequence resource="EMBL-CDS" id="AAH16579"/>
    </conflict>
</comment>
<feature type="chain" id="PRO_0000248025" description="TPA-induced transmembrane protein homolog">
    <location>
        <begin position="1"/>
        <end position="218"/>
    </location>
</feature>
<feature type="transmembrane region" description="Helical" evidence="1">
    <location>
        <begin position="66"/>
        <end position="86"/>
    </location>
</feature>
<feature type="region of interest" description="Disordered" evidence="2">
    <location>
        <begin position="1"/>
        <end position="54"/>
    </location>
</feature>
<feature type="sequence conflict" description="In Ref. 2; AAH16579." evidence="3" ref="2">
    <original>T</original>
    <variation>M</variation>
    <location>
        <position position="113"/>
    </location>
</feature>
<feature type="sequence conflict" description="In Ref. 2; AAH16579." evidence="3" ref="2">
    <original>G</original>
    <variation>E</variation>
    <location>
        <position position="125"/>
    </location>
</feature>
<feature type="sequence conflict" description="In Ref. 2; AAH16579." evidence="3" ref="2">
    <original>S</original>
    <variation>A</variation>
    <location>
        <position position="143"/>
    </location>
</feature>
<protein>
    <recommendedName>
        <fullName>TPA-induced transmembrane protein homolog</fullName>
    </recommendedName>
</protein>
<keyword id="KW-0256">Endoplasmic reticulum</keyword>
<keyword id="KW-0472">Membrane</keyword>
<keyword id="KW-1185">Reference proteome</keyword>
<keyword id="KW-0812">Transmembrane</keyword>
<keyword id="KW-1133">Transmembrane helix</keyword>
<evidence type="ECO:0000255" key="1"/>
<evidence type="ECO:0000256" key="2">
    <source>
        <dbReference type="SAM" id="MobiDB-lite"/>
    </source>
</evidence>
<evidence type="ECO:0000305" key="3"/>
<name>TTMP_MOUSE</name>
<proteinExistence type="evidence at transcript level"/>
<reference key="1">
    <citation type="journal article" date="2005" name="Science">
        <title>The transcriptional landscape of the mammalian genome.</title>
        <authorList>
            <person name="Carninci P."/>
            <person name="Kasukawa T."/>
            <person name="Katayama S."/>
            <person name="Gough J."/>
            <person name="Frith M.C."/>
            <person name="Maeda N."/>
            <person name="Oyama R."/>
            <person name="Ravasi T."/>
            <person name="Lenhard B."/>
            <person name="Wells C."/>
            <person name="Kodzius R."/>
            <person name="Shimokawa K."/>
            <person name="Bajic V.B."/>
            <person name="Brenner S.E."/>
            <person name="Batalov S."/>
            <person name="Forrest A.R."/>
            <person name="Zavolan M."/>
            <person name="Davis M.J."/>
            <person name="Wilming L.G."/>
            <person name="Aidinis V."/>
            <person name="Allen J.E."/>
            <person name="Ambesi-Impiombato A."/>
            <person name="Apweiler R."/>
            <person name="Aturaliya R.N."/>
            <person name="Bailey T.L."/>
            <person name="Bansal M."/>
            <person name="Baxter L."/>
            <person name="Beisel K.W."/>
            <person name="Bersano T."/>
            <person name="Bono H."/>
            <person name="Chalk A.M."/>
            <person name="Chiu K.P."/>
            <person name="Choudhary V."/>
            <person name="Christoffels A."/>
            <person name="Clutterbuck D.R."/>
            <person name="Crowe M.L."/>
            <person name="Dalla E."/>
            <person name="Dalrymple B.P."/>
            <person name="de Bono B."/>
            <person name="Della Gatta G."/>
            <person name="di Bernardo D."/>
            <person name="Down T."/>
            <person name="Engstrom P."/>
            <person name="Fagiolini M."/>
            <person name="Faulkner G."/>
            <person name="Fletcher C.F."/>
            <person name="Fukushima T."/>
            <person name="Furuno M."/>
            <person name="Futaki S."/>
            <person name="Gariboldi M."/>
            <person name="Georgii-Hemming P."/>
            <person name="Gingeras T.R."/>
            <person name="Gojobori T."/>
            <person name="Green R.E."/>
            <person name="Gustincich S."/>
            <person name="Harbers M."/>
            <person name="Hayashi Y."/>
            <person name="Hensch T.K."/>
            <person name="Hirokawa N."/>
            <person name="Hill D."/>
            <person name="Huminiecki L."/>
            <person name="Iacono M."/>
            <person name="Ikeo K."/>
            <person name="Iwama A."/>
            <person name="Ishikawa T."/>
            <person name="Jakt M."/>
            <person name="Kanapin A."/>
            <person name="Katoh M."/>
            <person name="Kawasawa Y."/>
            <person name="Kelso J."/>
            <person name="Kitamura H."/>
            <person name="Kitano H."/>
            <person name="Kollias G."/>
            <person name="Krishnan S.P."/>
            <person name="Kruger A."/>
            <person name="Kummerfeld S.K."/>
            <person name="Kurochkin I.V."/>
            <person name="Lareau L.F."/>
            <person name="Lazarevic D."/>
            <person name="Lipovich L."/>
            <person name="Liu J."/>
            <person name="Liuni S."/>
            <person name="McWilliam S."/>
            <person name="Madan Babu M."/>
            <person name="Madera M."/>
            <person name="Marchionni L."/>
            <person name="Matsuda H."/>
            <person name="Matsuzawa S."/>
            <person name="Miki H."/>
            <person name="Mignone F."/>
            <person name="Miyake S."/>
            <person name="Morris K."/>
            <person name="Mottagui-Tabar S."/>
            <person name="Mulder N."/>
            <person name="Nakano N."/>
            <person name="Nakauchi H."/>
            <person name="Ng P."/>
            <person name="Nilsson R."/>
            <person name="Nishiguchi S."/>
            <person name="Nishikawa S."/>
            <person name="Nori F."/>
            <person name="Ohara O."/>
            <person name="Okazaki Y."/>
            <person name="Orlando V."/>
            <person name="Pang K.C."/>
            <person name="Pavan W.J."/>
            <person name="Pavesi G."/>
            <person name="Pesole G."/>
            <person name="Petrovsky N."/>
            <person name="Piazza S."/>
            <person name="Reed J."/>
            <person name="Reid J.F."/>
            <person name="Ring B.Z."/>
            <person name="Ringwald M."/>
            <person name="Rost B."/>
            <person name="Ruan Y."/>
            <person name="Salzberg S.L."/>
            <person name="Sandelin A."/>
            <person name="Schneider C."/>
            <person name="Schoenbach C."/>
            <person name="Sekiguchi K."/>
            <person name="Semple C.A."/>
            <person name="Seno S."/>
            <person name="Sessa L."/>
            <person name="Sheng Y."/>
            <person name="Shibata Y."/>
            <person name="Shimada H."/>
            <person name="Shimada K."/>
            <person name="Silva D."/>
            <person name="Sinclair B."/>
            <person name="Sperling S."/>
            <person name="Stupka E."/>
            <person name="Sugiura K."/>
            <person name="Sultana R."/>
            <person name="Takenaka Y."/>
            <person name="Taki K."/>
            <person name="Tammoja K."/>
            <person name="Tan S.L."/>
            <person name="Tang S."/>
            <person name="Taylor M.S."/>
            <person name="Tegner J."/>
            <person name="Teichmann S.A."/>
            <person name="Ueda H.R."/>
            <person name="van Nimwegen E."/>
            <person name="Verardo R."/>
            <person name="Wei C.L."/>
            <person name="Yagi K."/>
            <person name="Yamanishi H."/>
            <person name="Zabarovsky E."/>
            <person name="Zhu S."/>
            <person name="Zimmer A."/>
            <person name="Hide W."/>
            <person name="Bult C."/>
            <person name="Grimmond S.M."/>
            <person name="Teasdale R.D."/>
            <person name="Liu E.T."/>
            <person name="Brusic V."/>
            <person name="Quackenbush J."/>
            <person name="Wahlestedt C."/>
            <person name="Mattick J.S."/>
            <person name="Hume D.A."/>
            <person name="Kai C."/>
            <person name="Sasaki D."/>
            <person name="Tomaru Y."/>
            <person name="Fukuda S."/>
            <person name="Kanamori-Katayama M."/>
            <person name="Suzuki M."/>
            <person name="Aoki J."/>
            <person name="Arakawa T."/>
            <person name="Iida J."/>
            <person name="Imamura K."/>
            <person name="Itoh M."/>
            <person name="Kato T."/>
            <person name="Kawaji H."/>
            <person name="Kawagashira N."/>
            <person name="Kawashima T."/>
            <person name="Kojima M."/>
            <person name="Kondo S."/>
            <person name="Konno H."/>
            <person name="Nakano K."/>
            <person name="Ninomiya N."/>
            <person name="Nishio T."/>
            <person name="Okada M."/>
            <person name="Plessy C."/>
            <person name="Shibata K."/>
            <person name="Shiraki T."/>
            <person name="Suzuki S."/>
            <person name="Tagami M."/>
            <person name="Waki K."/>
            <person name="Watahiki A."/>
            <person name="Okamura-Oho Y."/>
            <person name="Suzuki H."/>
            <person name="Kawai J."/>
            <person name="Hayashizaki Y."/>
        </authorList>
    </citation>
    <scope>NUCLEOTIDE SEQUENCE [LARGE SCALE MRNA]</scope>
    <source>
        <strain>C57BL/6J</strain>
        <tissue>Colon</tissue>
    </source>
</reference>
<reference key="2">
    <citation type="journal article" date="2004" name="Genome Res.">
        <title>The status, quality, and expansion of the NIH full-length cDNA project: the Mammalian Gene Collection (MGC).</title>
        <authorList>
            <consortium name="The MGC Project Team"/>
        </authorList>
    </citation>
    <scope>NUCLEOTIDE SEQUENCE [LARGE SCALE MRNA]</scope>
    <source>
        <strain>FVB/N</strain>
        <tissue>Mammary tumor</tissue>
    </source>
</reference>